<gene>
    <name evidence="1" type="primary">fabH1</name>
    <name type="ordered locus">BH2883</name>
</gene>
<sequence>MTRAGILGIGSYVGEHVVTNKDFEKRIDTSDEWIRTRTGIEERRFAPDNVDTSDMAYEASVKALKAAGVSAEEIDLILVATVTPDMPFPTVSTLVQQRLGAKKAAAMDISAACAGFIYGLATGQQFIENGGYKHVLVIGVEKLSKITDMTDRNTAVLFGDGAGAAVMGAVSEDRGILAYELGADGEGAMHINQKGEYIQMNGREVFKFAVRQMGESALSVLEKAGLSKEDVDFLIPHQANIRIMEASRERLELPVEKMSTTVKKYGNTSSASIPMAMVDELKDGKIKDGDLLVLVGFGAGLVWGSLALRWGR</sequence>
<reference key="1">
    <citation type="journal article" date="2000" name="Nucleic Acids Res.">
        <title>Complete genome sequence of the alkaliphilic bacterium Bacillus halodurans and genomic sequence comparison with Bacillus subtilis.</title>
        <authorList>
            <person name="Takami H."/>
            <person name="Nakasone K."/>
            <person name="Takaki Y."/>
            <person name="Maeno G."/>
            <person name="Sasaki R."/>
            <person name="Masui N."/>
            <person name="Fuji F."/>
            <person name="Hirama C."/>
            <person name="Nakamura Y."/>
            <person name="Ogasawara N."/>
            <person name="Kuhara S."/>
            <person name="Horikoshi K."/>
        </authorList>
    </citation>
    <scope>NUCLEOTIDE SEQUENCE [LARGE SCALE GENOMIC DNA]</scope>
    <source>
        <strain>ATCC BAA-125 / DSM 18197 / FERM 7344 / JCM 9153 / C-125</strain>
    </source>
</reference>
<accession>Q9K8W9</accession>
<keyword id="KW-0012">Acyltransferase</keyword>
<keyword id="KW-0963">Cytoplasm</keyword>
<keyword id="KW-0275">Fatty acid biosynthesis</keyword>
<keyword id="KW-0276">Fatty acid metabolism</keyword>
<keyword id="KW-0444">Lipid biosynthesis</keyword>
<keyword id="KW-0443">Lipid metabolism</keyword>
<keyword id="KW-0511">Multifunctional enzyme</keyword>
<keyword id="KW-1185">Reference proteome</keyword>
<keyword id="KW-0808">Transferase</keyword>
<comment type="function">
    <text evidence="1">Catalyzes the condensation reaction of fatty acid synthesis by the addition to an acyl acceptor of two carbons from malonyl-ACP. Catalyzes the first condensation reaction which initiates fatty acid synthesis and may therefore play a role in governing the total rate of fatty acid production. Possesses both acetoacetyl-ACP synthase and acetyl transacylase activities. Its substrate specificity determines the biosynthesis of branched-chain and/or straight-chain of fatty acids.</text>
</comment>
<comment type="catalytic activity">
    <reaction evidence="1">
        <text>malonyl-[ACP] + acetyl-CoA + H(+) = 3-oxobutanoyl-[ACP] + CO2 + CoA</text>
        <dbReference type="Rhea" id="RHEA:12080"/>
        <dbReference type="Rhea" id="RHEA-COMP:9623"/>
        <dbReference type="Rhea" id="RHEA-COMP:9625"/>
        <dbReference type="ChEBI" id="CHEBI:15378"/>
        <dbReference type="ChEBI" id="CHEBI:16526"/>
        <dbReference type="ChEBI" id="CHEBI:57287"/>
        <dbReference type="ChEBI" id="CHEBI:57288"/>
        <dbReference type="ChEBI" id="CHEBI:78449"/>
        <dbReference type="ChEBI" id="CHEBI:78450"/>
        <dbReference type="EC" id="2.3.1.180"/>
    </reaction>
</comment>
<comment type="pathway">
    <text evidence="1">Lipid metabolism; fatty acid biosynthesis.</text>
</comment>
<comment type="subunit">
    <text evidence="1">Homodimer.</text>
</comment>
<comment type="subcellular location">
    <subcellularLocation>
        <location evidence="1">Cytoplasm</location>
    </subcellularLocation>
</comment>
<comment type="domain">
    <text evidence="1">The last Arg residue of the ACP-binding site is essential for the weak association between ACP/AcpP and FabH.</text>
</comment>
<comment type="similarity">
    <text evidence="1">Belongs to the thiolase-like superfamily. FabH family.</text>
</comment>
<name>FABH1_HALH5</name>
<protein>
    <recommendedName>
        <fullName evidence="1">Beta-ketoacyl-[acyl-carrier-protein] synthase III 1</fullName>
        <shortName evidence="1">Beta-ketoacyl-ACP synthase III 1</shortName>
        <shortName evidence="1">KAS III 1</shortName>
        <ecNumber evidence="1">2.3.1.180</ecNumber>
    </recommendedName>
    <alternativeName>
        <fullName evidence="1">3-oxoacyl-[acyl-carrier-protein] synthase 3 1</fullName>
    </alternativeName>
    <alternativeName>
        <fullName evidence="1">3-oxoacyl-[acyl-carrier-protein] synthase III 1</fullName>
    </alternativeName>
</protein>
<evidence type="ECO:0000255" key="1">
    <source>
        <dbReference type="HAMAP-Rule" id="MF_01815"/>
    </source>
</evidence>
<feature type="chain" id="PRO_0000110397" description="Beta-ketoacyl-[acyl-carrier-protein] synthase III 1">
    <location>
        <begin position="1"/>
        <end position="312"/>
    </location>
</feature>
<feature type="region of interest" description="ACP-binding" evidence="1">
    <location>
        <begin position="238"/>
        <end position="242"/>
    </location>
</feature>
<feature type="active site" evidence="1">
    <location>
        <position position="113"/>
    </location>
</feature>
<feature type="active site" evidence="1">
    <location>
        <position position="237"/>
    </location>
</feature>
<feature type="active site" evidence="1">
    <location>
        <position position="267"/>
    </location>
</feature>
<organism>
    <name type="scientific">Halalkalibacterium halodurans (strain ATCC BAA-125 / DSM 18197 / FERM 7344 / JCM 9153 / C-125)</name>
    <name type="common">Bacillus halodurans</name>
    <dbReference type="NCBI Taxonomy" id="272558"/>
    <lineage>
        <taxon>Bacteria</taxon>
        <taxon>Bacillati</taxon>
        <taxon>Bacillota</taxon>
        <taxon>Bacilli</taxon>
        <taxon>Bacillales</taxon>
        <taxon>Bacillaceae</taxon>
        <taxon>Halalkalibacterium (ex Joshi et al. 2022)</taxon>
    </lineage>
</organism>
<proteinExistence type="inferred from homology"/>
<dbReference type="EC" id="2.3.1.180" evidence="1"/>
<dbReference type="EMBL" id="BA000004">
    <property type="protein sequence ID" value="BAB06602.1"/>
    <property type="molecule type" value="Genomic_DNA"/>
</dbReference>
<dbReference type="PIR" id="C84010">
    <property type="entry name" value="C84010"/>
</dbReference>
<dbReference type="RefSeq" id="WP_010899030.1">
    <property type="nucleotide sequence ID" value="NC_002570.2"/>
</dbReference>
<dbReference type="SMR" id="Q9K8W9"/>
<dbReference type="STRING" id="272558.gene:10728793"/>
<dbReference type="KEGG" id="bha:BH2883"/>
<dbReference type="eggNOG" id="COG0332">
    <property type="taxonomic scope" value="Bacteria"/>
</dbReference>
<dbReference type="HOGENOM" id="CLU_039592_3_1_9"/>
<dbReference type="OrthoDB" id="9815506at2"/>
<dbReference type="UniPathway" id="UPA00094"/>
<dbReference type="Proteomes" id="UP000001258">
    <property type="component" value="Chromosome"/>
</dbReference>
<dbReference type="GO" id="GO:0005737">
    <property type="term" value="C:cytoplasm"/>
    <property type="evidence" value="ECO:0007669"/>
    <property type="project" value="UniProtKB-SubCell"/>
</dbReference>
<dbReference type="GO" id="GO:0004315">
    <property type="term" value="F:3-oxoacyl-[acyl-carrier-protein] synthase activity"/>
    <property type="evidence" value="ECO:0007669"/>
    <property type="project" value="InterPro"/>
</dbReference>
<dbReference type="GO" id="GO:0033818">
    <property type="term" value="F:beta-ketoacyl-acyl-carrier-protein synthase III activity"/>
    <property type="evidence" value="ECO:0007669"/>
    <property type="project" value="UniProtKB-UniRule"/>
</dbReference>
<dbReference type="GO" id="GO:0006633">
    <property type="term" value="P:fatty acid biosynthetic process"/>
    <property type="evidence" value="ECO:0007669"/>
    <property type="project" value="UniProtKB-UniRule"/>
</dbReference>
<dbReference type="CDD" id="cd00830">
    <property type="entry name" value="KAS_III"/>
    <property type="match status" value="1"/>
</dbReference>
<dbReference type="FunFam" id="3.40.47.10:FF:000004">
    <property type="entry name" value="3-oxoacyl-[acyl-carrier-protein] synthase 3"/>
    <property type="match status" value="1"/>
</dbReference>
<dbReference type="Gene3D" id="3.40.47.10">
    <property type="match status" value="1"/>
</dbReference>
<dbReference type="HAMAP" id="MF_01815">
    <property type="entry name" value="FabH"/>
    <property type="match status" value="1"/>
</dbReference>
<dbReference type="InterPro" id="IPR013747">
    <property type="entry name" value="ACP_syn_III_C"/>
</dbReference>
<dbReference type="InterPro" id="IPR013751">
    <property type="entry name" value="ACP_syn_III_N"/>
</dbReference>
<dbReference type="InterPro" id="IPR004655">
    <property type="entry name" value="FabH"/>
</dbReference>
<dbReference type="InterPro" id="IPR016039">
    <property type="entry name" value="Thiolase-like"/>
</dbReference>
<dbReference type="NCBIfam" id="TIGR00747">
    <property type="entry name" value="fabH"/>
    <property type="match status" value="1"/>
</dbReference>
<dbReference type="NCBIfam" id="NF006829">
    <property type="entry name" value="PRK09352.1"/>
    <property type="match status" value="1"/>
</dbReference>
<dbReference type="PANTHER" id="PTHR43091">
    <property type="entry name" value="3-OXOACYL-[ACYL-CARRIER-PROTEIN] SYNTHASE"/>
    <property type="match status" value="1"/>
</dbReference>
<dbReference type="PANTHER" id="PTHR43091:SF1">
    <property type="entry name" value="BETA-KETOACYL-[ACYL-CARRIER-PROTEIN] SYNTHASE III, CHLOROPLASTIC"/>
    <property type="match status" value="1"/>
</dbReference>
<dbReference type="Pfam" id="PF08545">
    <property type="entry name" value="ACP_syn_III"/>
    <property type="match status" value="1"/>
</dbReference>
<dbReference type="Pfam" id="PF08541">
    <property type="entry name" value="ACP_syn_III_C"/>
    <property type="match status" value="1"/>
</dbReference>
<dbReference type="SUPFAM" id="SSF53901">
    <property type="entry name" value="Thiolase-like"/>
    <property type="match status" value="1"/>
</dbReference>